<organism>
    <name type="scientific">Yersinia pseudotuberculosis serotype O:3 (strain YPIII)</name>
    <dbReference type="NCBI Taxonomy" id="502800"/>
    <lineage>
        <taxon>Bacteria</taxon>
        <taxon>Pseudomonadati</taxon>
        <taxon>Pseudomonadota</taxon>
        <taxon>Gammaproteobacteria</taxon>
        <taxon>Enterobacterales</taxon>
        <taxon>Yersiniaceae</taxon>
        <taxon>Yersinia</taxon>
    </lineage>
</organism>
<proteinExistence type="inferred from homology"/>
<gene>
    <name evidence="1" type="primary">queC</name>
    <name type="ordered locus">YPK_3227</name>
</gene>
<sequence length="232" mass="25472">MKRAVVVFSGGQDSTTCLIQALQQYDEVHCITFDYGQRHRTEIDVARELALQLGATAHKVLDVGMLNELAVSSLTRDSIPVPSYDANADGALPSTFVPGRNILFLTLASIYAYQVQAQAVITGVCETDFSGYPDCRDEFIKALNHAIDLGIGRDIAFITPLMWLDKAETWALADYYQQLDLIRHHTLTCYNGIKGDGCGQCAACHLRAKGLASYMANKQQVILNLKQKVGLA</sequence>
<evidence type="ECO:0000255" key="1">
    <source>
        <dbReference type="HAMAP-Rule" id="MF_01633"/>
    </source>
</evidence>
<protein>
    <recommendedName>
        <fullName evidence="1">7-cyano-7-deazaguanine synthase</fullName>
        <ecNumber evidence="1">6.3.4.20</ecNumber>
    </recommendedName>
    <alternativeName>
        <fullName evidence="1">7-cyano-7-carbaguanine synthase</fullName>
    </alternativeName>
    <alternativeName>
        <fullName evidence="1">PreQ(0) synthase</fullName>
    </alternativeName>
    <alternativeName>
        <fullName evidence="1">Queuosine biosynthesis protein QueC</fullName>
    </alternativeName>
</protein>
<comment type="function">
    <text evidence="1">Catalyzes the ATP-dependent conversion of 7-carboxy-7-deazaguanine (CDG) to 7-cyano-7-deazaguanine (preQ(0)).</text>
</comment>
<comment type="catalytic activity">
    <reaction evidence="1">
        <text>7-carboxy-7-deazaguanine + NH4(+) + ATP = 7-cyano-7-deazaguanine + ADP + phosphate + H2O + H(+)</text>
        <dbReference type="Rhea" id="RHEA:27982"/>
        <dbReference type="ChEBI" id="CHEBI:15377"/>
        <dbReference type="ChEBI" id="CHEBI:15378"/>
        <dbReference type="ChEBI" id="CHEBI:28938"/>
        <dbReference type="ChEBI" id="CHEBI:30616"/>
        <dbReference type="ChEBI" id="CHEBI:43474"/>
        <dbReference type="ChEBI" id="CHEBI:45075"/>
        <dbReference type="ChEBI" id="CHEBI:61036"/>
        <dbReference type="ChEBI" id="CHEBI:456216"/>
        <dbReference type="EC" id="6.3.4.20"/>
    </reaction>
</comment>
<comment type="cofactor">
    <cofactor evidence="1">
        <name>Zn(2+)</name>
        <dbReference type="ChEBI" id="CHEBI:29105"/>
    </cofactor>
    <text evidence="1">Binds 1 zinc ion per subunit.</text>
</comment>
<comment type="pathway">
    <text evidence="1">Purine metabolism; 7-cyano-7-deazaguanine biosynthesis.</text>
</comment>
<comment type="similarity">
    <text evidence="1">Belongs to the QueC family.</text>
</comment>
<reference key="1">
    <citation type="submission" date="2008-02" db="EMBL/GenBank/DDBJ databases">
        <title>Complete sequence of Yersinia pseudotuberculosis YPIII.</title>
        <authorList>
            <consortium name="US DOE Joint Genome Institute"/>
            <person name="Copeland A."/>
            <person name="Lucas S."/>
            <person name="Lapidus A."/>
            <person name="Glavina del Rio T."/>
            <person name="Dalin E."/>
            <person name="Tice H."/>
            <person name="Bruce D."/>
            <person name="Goodwin L."/>
            <person name="Pitluck S."/>
            <person name="Munk A.C."/>
            <person name="Brettin T."/>
            <person name="Detter J.C."/>
            <person name="Han C."/>
            <person name="Tapia R."/>
            <person name="Schmutz J."/>
            <person name="Larimer F."/>
            <person name="Land M."/>
            <person name="Hauser L."/>
            <person name="Challacombe J.F."/>
            <person name="Green L."/>
            <person name="Lindler L.E."/>
            <person name="Nikolich M.P."/>
            <person name="Richardson P."/>
        </authorList>
    </citation>
    <scope>NUCLEOTIDE SEQUENCE [LARGE SCALE GENOMIC DNA]</scope>
    <source>
        <strain>YPIII</strain>
    </source>
</reference>
<keyword id="KW-0067">ATP-binding</keyword>
<keyword id="KW-0436">Ligase</keyword>
<keyword id="KW-0479">Metal-binding</keyword>
<keyword id="KW-0547">Nucleotide-binding</keyword>
<keyword id="KW-0671">Queuosine biosynthesis</keyword>
<keyword id="KW-0862">Zinc</keyword>
<accession>B1JHR4</accession>
<name>QUEC_YERPY</name>
<dbReference type="EC" id="6.3.4.20" evidence="1"/>
<dbReference type="EMBL" id="CP000950">
    <property type="protein sequence ID" value="ACA69496.1"/>
    <property type="molecule type" value="Genomic_DNA"/>
</dbReference>
<dbReference type="RefSeq" id="WP_002208635.1">
    <property type="nucleotide sequence ID" value="NZ_CP009792.1"/>
</dbReference>
<dbReference type="SMR" id="B1JHR4"/>
<dbReference type="GeneID" id="57975561"/>
<dbReference type="KEGG" id="ypy:YPK_3227"/>
<dbReference type="PATRIC" id="fig|502800.11.peg.3954"/>
<dbReference type="UniPathway" id="UPA00391"/>
<dbReference type="GO" id="GO:0005524">
    <property type="term" value="F:ATP binding"/>
    <property type="evidence" value="ECO:0007669"/>
    <property type="project" value="UniProtKB-UniRule"/>
</dbReference>
<dbReference type="GO" id="GO:0016879">
    <property type="term" value="F:ligase activity, forming carbon-nitrogen bonds"/>
    <property type="evidence" value="ECO:0007669"/>
    <property type="project" value="UniProtKB-UniRule"/>
</dbReference>
<dbReference type="GO" id="GO:0008270">
    <property type="term" value="F:zinc ion binding"/>
    <property type="evidence" value="ECO:0007669"/>
    <property type="project" value="UniProtKB-UniRule"/>
</dbReference>
<dbReference type="GO" id="GO:0008616">
    <property type="term" value="P:queuosine biosynthetic process"/>
    <property type="evidence" value="ECO:0007669"/>
    <property type="project" value="UniProtKB-UniRule"/>
</dbReference>
<dbReference type="CDD" id="cd01995">
    <property type="entry name" value="QueC-like"/>
    <property type="match status" value="1"/>
</dbReference>
<dbReference type="FunFam" id="3.40.50.620:FF:000017">
    <property type="entry name" value="7-cyano-7-deazaguanine synthase"/>
    <property type="match status" value="1"/>
</dbReference>
<dbReference type="Gene3D" id="3.40.50.620">
    <property type="entry name" value="HUPs"/>
    <property type="match status" value="1"/>
</dbReference>
<dbReference type="HAMAP" id="MF_01633">
    <property type="entry name" value="QueC"/>
    <property type="match status" value="1"/>
</dbReference>
<dbReference type="InterPro" id="IPR018317">
    <property type="entry name" value="QueC"/>
</dbReference>
<dbReference type="InterPro" id="IPR014729">
    <property type="entry name" value="Rossmann-like_a/b/a_fold"/>
</dbReference>
<dbReference type="NCBIfam" id="TIGR00364">
    <property type="entry name" value="7-cyano-7-deazaguanine synthase QueC"/>
    <property type="match status" value="1"/>
</dbReference>
<dbReference type="NCBIfam" id="NF008317">
    <property type="entry name" value="PRK11106.1"/>
    <property type="match status" value="1"/>
</dbReference>
<dbReference type="PANTHER" id="PTHR42914">
    <property type="entry name" value="7-CYANO-7-DEAZAGUANINE SYNTHASE"/>
    <property type="match status" value="1"/>
</dbReference>
<dbReference type="PANTHER" id="PTHR42914:SF1">
    <property type="entry name" value="7-CYANO-7-DEAZAGUANINE SYNTHASE"/>
    <property type="match status" value="1"/>
</dbReference>
<dbReference type="Pfam" id="PF06508">
    <property type="entry name" value="QueC"/>
    <property type="match status" value="1"/>
</dbReference>
<dbReference type="PIRSF" id="PIRSF006293">
    <property type="entry name" value="ExsB"/>
    <property type="match status" value="1"/>
</dbReference>
<dbReference type="SUPFAM" id="SSF52402">
    <property type="entry name" value="Adenine nucleotide alpha hydrolases-like"/>
    <property type="match status" value="1"/>
</dbReference>
<feature type="chain" id="PRO_1000186650" description="7-cyano-7-deazaguanine synthase">
    <location>
        <begin position="1"/>
        <end position="232"/>
    </location>
</feature>
<feature type="binding site" evidence="1">
    <location>
        <begin position="8"/>
        <end position="18"/>
    </location>
    <ligand>
        <name>ATP</name>
        <dbReference type="ChEBI" id="CHEBI:30616"/>
    </ligand>
</feature>
<feature type="binding site" evidence="1">
    <location>
        <position position="189"/>
    </location>
    <ligand>
        <name>Zn(2+)</name>
        <dbReference type="ChEBI" id="CHEBI:29105"/>
    </ligand>
</feature>
<feature type="binding site" evidence="1">
    <location>
        <position position="198"/>
    </location>
    <ligand>
        <name>Zn(2+)</name>
        <dbReference type="ChEBI" id="CHEBI:29105"/>
    </ligand>
</feature>
<feature type="binding site" evidence="1">
    <location>
        <position position="201"/>
    </location>
    <ligand>
        <name>Zn(2+)</name>
        <dbReference type="ChEBI" id="CHEBI:29105"/>
    </ligand>
</feature>
<feature type="binding site" evidence="1">
    <location>
        <position position="204"/>
    </location>
    <ligand>
        <name>Zn(2+)</name>
        <dbReference type="ChEBI" id="CHEBI:29105"/>
    </ligand>
</feature>